<name>RS15_KLEP3</name>
<proteinExistence type="inferred from homology"/>
<protein>
    <recommendedName>
        <fullName evidence="1">Small ribosomal subunit protein uS15</fullName>
    </recommendedName>
    <alternativeName>
        <fullName evidence="2">30S ribosomal protein S15</fullName>
    </alternativeName>
</protein>
<feature type="chain" id="PRO_1000143129" description="Small ribosomal subunit protein uS15">
    <location>
        <begin position="1"/>
        <end position="89"/>
    </location>
</feature>
<keyword id="KW-0687">Ribonucleoprotein</keyword>
<keyword id="KW-0689">Ribosomal protein</keyword>
<keyword id="KW-0694">RNA-binding</keyword>
<keyword id="KW-0699">rRNA-binding</keyword>
<comment type="function">
    <text evidence="1">One of the primary rRNA binding proteins, it binds directly to 16S rRNA where it helps nucleate assembly of the platform of the 30S subunit by binding and bridging several RNA helices of the 16S rRNA.</text>
</comment>
<comment type="function">
    <text evidence="1">Forms an intersubunit bridge (bridge B4) with the 23S rRNA of the 50S subunit in the ribosome.</text>
</comment>
<comment type="subunit">
    <text evidence="1">Part of the 30S ribosomal subunit. Forms a bridge to the 50S subunit in the 70S ribosome, contacting the 23S rRNA.</text>
</comment>
<comment type="similarity">
    <text evidence="1">Belongs to the universal ribosomal protein uS15 family.</text>
</comment>
<accession>B5XSX7</accession>
<organism>
    <name type="scientific">Klebsiella pneumoniae (strain 342)</name>
    <dbReference type="NCBI Taxonomy" id="507522"/>
    <lineage>
        <taxon>Bacteria</taxon>
        <taxon>Pseudomonadati</taxon>
        <taxon>Pseudomonadota</taxon>
        <taxon>Gammaproteobacteria</taxon>
        <taxon>Enterobacterales</taxon>
        <taxon>Enterobacteriaceae</taxon>
        <taxon>Klebsiella/Raoultella group</taxon>
        <taxon>Klebsiella</taxon>
        <taxon>Klebsiella pneumoniae complex</taxon>
    </lineage>
</organism>
<gene>
    <name evidence="1" type="primary">rpsO</name>
    <name type="ordered locus">KPK_0549</name>
</gene>
<reference key="1">
    <citation type="journal article" date="2008" name="PLoS Genet.">
        <title>Complete genome sequence of the N2-fixing broad host range endophyte Klebsiella pneumoniae 342 and virulence predictions verified in mice.</title>
        <authorList>
            <person name="Fouts D.E."/>
            <person name="Tyler H.L."/>
            <person name="DeBoy R.T."/>
            <person name="Daugherty S."/>
            <person name="Ren Q."/>
            <person name="Badger J.H."/>
            <person name="Durkin A.S."/>
            <person name="Huot H."/>
            <person name="Shrivastava S."/>
            <person name="Kothari S."/>
            <person name="Dodson R.J."/>
            <person name="Mohamoud Y."/>
            <person name="Khouri H."/>
            <person name="Roesch L.F.W."/>
            <person name="Krogfelt K.A."/>
            <person name="Struve C."/>
            <person name="Triplett E.W."/>
            <person name="Methe B.A."/>
        </authorList>
    </citation>
    <scope>NUCLEOTIDE SEQUENCE [LARGE SCALE GENOMIC DNA]</scope>
    <source>
        <strain>342</strain>
    </source>
</reference>
<sequence>MSLSVEAKAKIVSEFGRGENDSGSTEVQVALLTAQINHLQGHFAEHKKDHHSRRGLLRMVSQRRKLLDYLKRKDVARYAALIERLGLRR</sequence>
<dbReference type="EMBL" id="CP000964">
    <property type="protein sequence ID" value="ACI11044.1"/>
    <property type="molecule type" value="Genomic_DNA"/>
</dbReference>
<dbReference type="SMR" id="B5XSX7"/>
<dbReference type="KEGG" id="kpe:KPK_0549"/>
<dbReference type="HOGENOM" id="CLU_148518_0_0_6"/>
<dbReference type="Proteomes" id="UP000001734">
    <property type="component" value="Chromosome"/>
</dbReference>
<dbReference type="GO" id="GO:0022627">
    <property type="term" value="C:cytosolic small ribosomal subunit"/>
    <property type="evidence" value="ECO:0007669"/>
    <property type="project" value="TreeGrafter"/>
</dbReference>
<dbReference type="GO" id="GO:0019843">
    <property type="term" value="F:rRNA binding"/>
    <property type="evidence" value="ECO:0007669"/>
    <property type="project" value="UniProtKB-UniRule"/>
</dbReference>
<dbReference type="GO" id="GO:0003735">
    <property type="term" value="F:structural constituent of ribosome"/>
    <property type="evidence" value="ECO:0007669"/>
    <property type="project" value="InterPro"/>
</dbReference>
<dbReference type="GO" id="GO:0006412">
    <property type="term" value="P:translation"/>
    <property type="evidence" value="ECO:0007669"/>
    <property type="project" value="UniProtKB-UniRule"/>
</dbReference>
<dbReference type="CDD" id="cd00353">
    <property type="entry name" value="Ribosomal_S15p_S13e"/>
    <property type="match status" value="1"/>
</dbReference>
<dbReference type="FunFam" id="1.10.287.10:FF:000002">
    <property type="entry name" value="30S ribosomal protein S15"/>
    <property type="match status" value="1"/>
</dbReference>
<dbReference type="Gene3D" id="6.10.250.3130">
    <property type="match status" value="1"/>
</dbReference>
<dbReference type="Gene3D" id="1.10.287.10">
    <property type="entry name" value="S15/NS1, RNA-binding"/>
    <property type="match status" value="1"/>
</dbReference>
<dbReference type="HAMAP" id="MF_01343_B">
    <property type="entry name" value="Ribosomal_uS15_B"/>
    <property type="match status" value="1"/>
</dbReference>
<dbReference type="InterPro" id="IPR000589">
    <property type="entry name" value="Ribosomal_uS15"/>
</dbReference>
<dbReference type="InterPro" id="IPR005290">
    <property type="entry name" value="Ribosomal_uS15_bac-type"/>
</dbReference>
<dbReference type="InterPro" id="IPR009068">
    <property type="entry name" value="uS15_NS1_RNA-bd_sf"/>
</dbReference>
<dbReference type="NCBIfam" id="TIGR00952">
    <property type="entry name" value="S15_bact"/>
    <property type="match status" value="1"/>
</dbReference>
<dbReference type="PANTHER" id="PTHR23321">
    <property type="entry name" value="RIBOSOMAL PROTEIN S15, BACTERIAL AND ORGANELLAR"/>
    <property type="match status" value="1"/>
</dbReference>
<dbReference type="PANTHER" id="PTHR23321:SF26">
    <property type="entry name" value="SMALL RIBOSOMAL SUBUNIT PROTEIN US15M"/>
    <property type="match status" value="1"/>
</dbReference>
<dbReference type="Pfam" id="PF00312">
    <property type="entry name" value="Ribosomal_S15"/>
    <property type="match status" value="1"/>
</dbReference>
<dbReference type="SMART" id="SM01387">
    <property type="entry name" value="Ribosomal_S15"/>
    <property type="match status" value="1"/>
</dbReference>
<dbReference type="SUPFAM" id="SSF47060">
    <property type="entry name" value="S15/NS1 RNA-binding domain"/>
    <property type="match status" value="1"/>
</dbReference>
<dbReference type="PROSITE" id="PS00362">
    <property type="entry name" value="RIBOSOMAL_S15"/>
    <property type="match status" value="1"/>
</dbReference>
<evidence type="ECO:0000255" key="1">
    <source>
        <dbReference type="HAMAP-Rule" id="MF_01343"/>
    </source>
</evidence>
<evidence type="ECO:0000305" key="2"/>